<sequence>MAVKKMVEAVFVVGLVVTMMNVWGAVPVEGAISCNQVVSAMTPCATYLIGNAATPAATCCPSIRGLDSQVKATPDRQAVCNCLKTQAKSYGVKLGKAANLPGLCKVTDLNVPISPNVDCSKVH</sequence>
<protein>
    <recommendedName>
        <fullName>Non-specific lipid-transfer protein</fullName>
        <shortName>LTP</shortName>
    </recommendedName>
</protein>
<name>NLTP_PINTA</name>
<organism>
    <name type="scientific">Pinus taeda</name>
    <name type="common">Loblolly pine</name>
    <dbReference type="NCBI Taxonomy" id="3352"/>
    <lineage>
        <taxon>Eukaryota</taxon>
        <taxon>Viridiplantae</taxon>
        <taxon>Streptophyta</taxon>
        <taxon>Embryophyta</taxon>
        <taxon>Tracheophyta</taxon>
        <taxon>Spermatophyta</taxon>
        <taxon>Pinopsida</taxon>
        <taxon>Pinidae</taxon>
        <taxon>Conifers I</taxon>
        <taxon>Pinales</taxon>
        <taxon>Pinaceae</taxon>
        <taxon>Pinus</taxon>
        <taxon>Pinus subgen. Pinus</taxon>
    </lineage>
</organism>
<reference key="1">
    <citation type="journal article" date="1994" name="Plant Mol. Biol.">
        <title>Lipid transfer protein genes of loblolly pine are members of a complex gene family.</title>
        <authorList>
            <person name="Kinlaw C.S."/>
            <person name="Gerttula S.M."/>
            <person name="Carter M.C."/>
        </authorList>
    </citation>
    <scope>NUCLEOTIDE SEQUENCE [MRNA]</scope>
    <source>
        <tissue>Root</tissue>
        <tissue>Shoot</tissue>
    </source>
</reference>
<dbReference type="EMBL" id="U10432">
    <property type="protein sequence ID" value="AAA82182.1"/>
    <property type="molecule type" value="mRNA"/>
</dbReference>
<dbReference type="PIR" id="S51816">
    <property type="entry name" value="S51816"/>
</dbReference>
<dbReference type="SMR" id="Q41073"/>
<dbReference type="GO" id="GO:0008289">
    <property type="term" value="F:lipid binding"/>
    <property type="evidence" value="ECO:0007669"/>
    <property type="project" value="UniProtKB-KW"/>
</dbReference>
<dbReference type="GO" id="GO:0006869">
    <property type="term" value="P:lipid transport"/>
    <property type="evidence" value="ECO:0007669"/>
    <property type="project" value="InterPro"/>
</dbReference>
<dbReference type="CDD" id="cd01960">
    <property type="entry name" value="nsLTP1"/>
    <property type="match status" value="1"/>
</dbReference>
<dbReference type="Gene3D" id="1.10.110.10">
    <property type="entry name" value="Plant lipid-transfer and hydrophobic proteins"/>
    <property type="match status" value="1"/>
</dbReference>
<dbReference type="InterPro" id="IPR036312">
    <property type="entry name" value="Bifun_inhib/LTP/seed_sf"/>
</dbReference>
<dbReference type="InterPro" id="IPR016140">
    <property type="entry name" value="Bifunc_inhib/LTP/seed_store"/>
</dbReference>
<dbReference type="InterPro" id="IPR000528">
    <property type="entry name" value="Plant_nsLTP"/>
</dbReference>
<dbReference type="PANTHER" id="PTHR33076">
    <property type="entry name" value="NON-SPECIFIC LIPID-TRANSFER PROTEIN 2-RELATED"/>
    <property type="match status" value="1"/>
</dbReference>
<dbReference type="Pfam" id="PF00234">
    <property type="entry name" value="Tryp_alpha_amyl"/>
    <property type="match status" value="1"/>
</dbReference>
<dbReference type="PRINTS" id="PR00382">
    <property type="entry name" value="LIPIDTRNSFER"/>
</dbReference>
<dbReference type="SMART" id="SM00499">
    <property type="entry name" value="AAI"/>
    <property type="match status" value="1"/>
</dbReference>
<dbReference type="SUPFAM" id="SSF47699">
    <property type="entry name" value="Bifunctional inhibitor/lipid-transfer protein/seed storage 2S albumin"/>
    <property type="match status" value="1"/>
</dbReference>
<dbReference type="PROSITE" id="PS00597">
    <property type="entry name" value="PLANT_LTP"/>
    <property type="match status" value="1"/>
</dbReference>
<accession>Q41073</accession>
<keyword id="KW-1015">Disulfide bond</keyword>
<keyword id="KW-0446">Lipid-binding</keyword>
<keyword id="KW-0732">Signal</keyword>
<keyword id="KW-0813">Transport</keyword>
<evidence type="ECO:0000250" key="1"/>
<evidence type="ECO:0000255" key="2"/>
<evidence type="ECO:0000305" key="3"/>
<proteinExistence type="evidence at transcript level"/>
<comment type="function">
    <text>Plant non-specific lipid-transfer proteins transfer phospholipids as well as galactolipids across membranes. May play a role in wax or cutin deposition in the cell walls of expanding epidermal cells and certain secretory tissues.</text>
</comment>
<comment type="similarity">
    <text evidence="3">Belongs to the plant LTP family.</text>
</comment>
<feature type="signal peptide" evidence="2">
    <location>
        <begin position="1"/>
        <end position="25"/>
    </location>
</feature>
<feature type="chain" id="PRO_0000018400" description="Non-specific lipid-transfer protein">
    <location>
        <begin position="26"/>
        <end position="123"/>
    </location>
</feature>
<feature type="disulfide bond" evidence="1">
    <location>
        <begin position="34"/>
        <end position="82"/>
    </location>
</feature>
<feature type="disulfide bond" evidence="1">
    <location>
        <begin position="44"/>
        <end position="59"/>
    </location>
</feature>
<feature type="disulfide bond" evidence="1">
    <location>
        <begin position="60"/>
        <end position="104"/>
    </location>
</feature>
<feature type="disulfide bond" evidence="1">
    <location>
        <begin position="80"/>
        <end position="119"/>
    </location>
</feature>